<protein>
    <recommendedName>
        <fullName evidence="1">FMN-dependent NADH:quinone oxidoreductase 3</fullName>
        <ecNumber evidence="1">1.6.5.-</ecNumber>
    </recommendedName>
    <alternativeName>
        <fullName evidence="1">Azo-dye reductase 3</fullName>
    </alternativeName>
    <alternativeName>
        <fullName evidence="1">FMN-dependent NADH-azo compound oxidoreductase 3</fullName>
    </alternativeName>
    <alternativeName>
        <fullName evidence="1">FMN-dependent NADH-azoreductase 3</fullName>
        <ecNumber evidence="1">1.7.1.17</ecNumber>
    </alternativeName>
</protein>
<name>AZOR3_BACAN</name>
<accession>Q81R20</accession>
<accession>Q6HZ90</accession>
<accession>Q6KT84</accession>
<comment type="function">
    <text evidence="1">Quinone reductase that provides resistance to thiol-specific stress caused by electrophilic quinones.</text>
</comment>
<comment type="function">
    <text evidence="1">Also exhibits azoreductase activity. Catalyzes the reductive cleavage of the azo bond in aromatic azo compounds to the corresponding amines.</text>
</comment>
<comment type="catalytic activity">
    <reaction evidence="1">
        <text>2 a quinone + NADH + H(+) = 2 a 1,4-benzosemiquinone + NAD(+)</text>
        <dbReference type="Rhea" id="RHEA:65952"/>
        <dbReference type="ChEBI" id="CHEBI:15378"/>
        <dbReference type="ChEBI" id="CHEBI:57540"/>
        <dbReference type="ChEBI" id="CHEBI:57945"/>
        <dbReference type="ChEBI" id="CHEBI:132124"/>
        <dbReference type="ChEBI" id="CHEBI:134225"/>
    </reaction>
</comment>
<comment type="catalytic activity">
    <reaction evidence="1">
        <text>N,N-dimethyl-1,4-phenylenediamine + anthranilate + 2 NAD(+) = 2-(4-dimethylaminophenyl)diazenylbenzoate + 2 NADH + 2 H(+)</text>
        <dbReference type="Rhea" id="RHEA:55872"/>
        <dbReference type="ChEBI" id="CHEBI:15378"/>
        <dbReference type="ChEBI" id="CHEBI:15783"/>
        <dbReference type="ChEBI" id="CHEBI:16567"/>
        <dbReference type="ChEBI" id="CHEBI:57540"/>
        <dbReference type="ChEBI" id="CHEBI:57945"/>
        <dbReference type="ChEBI" id="CHEBI:71579"/>
        <dbReference type="EC" id="1.7.1.17"/>
    </reaction>
</comment>
<comment type="cofactor">
    <cofactor evidence="1">
        <name>FMN</name>
        <dbReference type="ChEBI" id="CHEBI:58210"/>
    </cofactor>
    <text evidence="1">Binds 1 FMN per subunit.</text>
</comment>
<comment type="subunit">
    <text evidence="1">Homodimer.</text>
</comment>
<comment type="similarity">
    <text evidence="1">Belongs to the azoreductase type 1 family.</text>
</comment>
<dbReference type="EC" id="1.6.5.-" evidence="1"/>
<dbReference type="EC" id="1.7.1.17" evidence="1"/>
<dbReference type="EMBL" id="AE016879">
    <property type="protein sequence ID" value="AAP26116.1"/>
    <property type="molecule type" value="Genomic_DNA"/>
</dbReference>
<dbReference type="EMBL" id="AE017225">
    <property type="protein sequence ID" value="AAT54399.1"/>
    <property type="molecule type" value="Genomic_DNA"/>
</dbReference>
<dbReference type="EMBL" id="AE017334">
    <property type="protein sequence ID" value="AAT31360.1"/>
    <property type="molecule type" value="Genomic_DNA"/>
</dbReference>
<dbReference type="RefSeq" id="NP_844630.1">
    <property type="nucleotide sequence ID" value="NC_003997.3"/>
</dbReference>
<dbReference type="RefSeq" id="WP_000170019.1">
    <property type="nucleotide sequence ID" value="NZ_WXXJ01000017.1"/>
</dbReference>
<dbReference type="RefSeq" id="YP_028348.1">
    <property type="nucleotide sequence ID" value="NC_005945.1"/>
</dbReference>
<dbReference type="SMR" id="Q81R20"/>
<dbReference type="STRING" id="261594.GBAA_2239"/>
<dbReference type="DNASU" id="1085516"/>
<dbReference type="GeneID" id="45022132"/>
<dbReference type="KEGG" id="ban:BA_2239"/>
<dbReference type="KEGG" id="banh:HYU01_11170"/>
<dbReference type="KEGG" id="bar:GBAA_2239"/>
<dbReference type="KEGG" id="bat:BAS2085"/>
<dbReference type="PATRIC" id="fig|198094.11.peg.2209"/>
<dbReference type="eggNOG" id="COG1182">
    <property type="taxonomic scope" value="Bacteria"/>
</dbReference>
<dbReference type="HOGENOM" id="CLU_088964_3_1_9"/>
<dbReference type="OMA" id="FIARPRV"/>
<dbReference type="OrthoDB" id="9805013at2"/>
<dbReference type="Proteomes" id="UP000000427">
    <property type="component" value="Chromosome"/>
</dbReference>
<dbReference type="Proteomes" id="UP000000594">
    <property type="component" value="Chromosome"/>
</dbReference>
<dbReference type="GO" id="GO:0009055">
    <property type="term" value="F:electron transfer activity"/>
    <property type="evidence" value="ECO:0007669"/>
    <property type="project" value="UniProtKB-UniRule"/>
</dbReference>
<dbReference type="GO" id="GO:0010181">
    <property type="term" value="F:FMN binding"/>
    <property type="evidence" value="ECO:0007669"/>
    <property type="project" value="UniProtKB-UniRule"/>
</dbReference>
<dbReference type="GO" id="GO:0016652">
    <property type="term" value="F:oxidoreductase activity, acting on NAD(P)H as acceptor"/>
    <property type="evidence" value="ECO:0007669"/>
    <property type="project" value="UniProtKB-UniRule"/>
</dbReference>
<dbReference type="GO" id="GO:0016655">
    <property type="term" value="F:oxidoreductase activity, acting on NAD(P)H, quinone or similar compound as acceptor"/>
    <property type="evidence" value="ECO:0007669"/>
    <property type="project" value="InterPro"/>
</dbReference>
<dbReference type="Gene3D" id="3.40.50.360">
    <property type="match status" value="1"/>
</dbReference>
<dbReference type="HAMAP" id="MF_01216">
    <property type="entry name" value="Azoreductase_type1"/>
    <property type="match status" value="1"/>
</dbReference>
<dbReference type="InterPro" id="IPR003680">
    <property type="entry name" value="Flavodoxin_fold"/>
</dbReference>
<dbReference type="InterPro" id="IPR029039">
    <property type="entry name" value="Flavoprotein-like_sf"/>
</dbReference>
<dbReference type="InterPro" id="IPR050104">
    <property type="entry name" value="FMN-dep_NADH:Q_OxRdtase_AzoR1"/>
</dbReference>
<dbReference type="InterPro" id="IPR023048">
    <property type="entry name" value="NADH:quinone_OxRdtase_FMN_depd"/>
</dbReference>
<dbReference type="NCBIfam" id="NF010075">
    <property type="entry name" value="PRK13556.1"/>
    <property type="match status" value="1"/>
</dbReference>
<dbReference type="PANTHER" id="PTHR43741">
    <property type="entry name" value="FMN-DEPENDENT NADH-AZOREDUCTASE 1"/>
    <property type="match status" value="1"/>
</dbReference>
<dbReference type="PANTHER" id="PTHR43741:SF7">
    <property type="entry name" value="FMN-DEPENDENT NADH:QUINONE OXIDOREDUCTASE"/>
    <property type="match status" value="1"/>
</dbReference>
<dbReference type="Pfam" id="PF02525">
    <property type="entry name" value="Flavodoxin_2"/>
    <property type="match status" value="1"/>
</dbReference>
<dbReference type="SUPFAM" id="SSF52218">
    <property type="entry name" value="Flavoproteins"/>
    <property type="match status" value="1"/>
</dbReference>
<organism>
    <name type="scientific">Bacillus anthracis</name>
    <dbReference type="NCBI Taxonomy" id="1392"/>
    <lineage>
        <taxon>Bacteria</taxon>
        <taxon>Bacillati</taxon>
        <taxon>Bacillota</taxon>
        <taxon>Bacilli</taxon>
        <taxon>Bacillales</taxon>
        <taxon>Bacillaceae</taxon>
        <taxon>Bacillus</taxon>
        <taxon>Bacillus cereus group</taxon>
    </lineage>
</organism>
<reference key="1">
    <citation type="journal article" date="2003" name="Nature">
        <title>The genome sequence of Bacillus anthracis Ames and comparison to closely related bacteria.</title>
        <authorList>
            <person name="Read T.D."/>
            <person name="Peterson S.N."/>
            <person name="Tourasse N.J."/>
            <person name="Baillie L.W."/>
            <person name="Paulsen I.T."/>
            <person name="Nelson K.E."/>
            <person name="Tettelin H."/>
            <person name="Fouts D.E."/>
            <person name="Eisen J.A."/>
            <person name="Gill S.R."/>
            <person name="Holtzapple E.K."/>
            <person name="Okstad O.A."/>
            <person name="Helgason E."/>
            <person name="Rilstone J."/>
            <person name="Wu M."/>
            <person name="Kolonay J.F."/>
            <person name="Beanan M.J."/>
            <person name="Dodson R.J."/>
            <person name="Brinkac L.M."/>
            <person name="Gwinn M.L."/>
            <person name="DeBoy R.T."/>
            <person name="Madpu R."/>
            <person name="Daugherty S.C."/>
            <person name="Durkin A.S."/>
            <person name="Haft D.H."/>
            <person name="Nelson W.C."/>
            <person name="Peterson J.D."/>
            <person name="Pop M."/>
            <person name="Khouri H.M."/>
            <person name="Radune D."/>
            <person name="Benton J.L."/>
            <person name="Mahamoud Y."/>
            <person name="Jiang L."/>
            <person name="Hance I.R."/>
            <person name="Weidman J.F."/>
            <person name="Berry K.J."/>
            <person name="Plaut R.D."/>
            <person name="Wolf A.M."/>
            <person name="Watkins K.L."/>
            <person name="Nierman W.C."/>
            <person name="Hazen A."/>
            <person name="Cline R.T."/>
            <person name="Redmond C."/>
            <person name="Thwaite J.E."/>
            <person name="White O."/>
            <person name="Salzberg S.L."/>
            <person name="Thomason B."/>
            <person name="Friedlander A.M."/>
            <person name="Koehler T.M."/>
            <person name="Hanna P.C."/>
            <person name="Kolstoe A.-B."/>
            <person name="Fraser C.M."/>
        </authorList>
    </citation>
    <scope>NUCLEOTIDE SEQUENCE [LARGE SCALE GENOMIC DNA]</scope>
    <source>
        <strain>Ames / isolate Porton</strain>
    </source>
</reference>
<reference key="2">
    <citation type="submission" date="2004-01" db="EMBL/GenBank/DDBJ databases">
        <title>Complete genome sequence of Bacillus anthracis Sterne.</title>
        <authorList>
            <person name="Brettin T.S."/>
            <person name="Bruce D."/>
            <person name="Challacombe J.F."/>
            <person name="Gilna P."/>
            <person name="Han C."/>
            <person name="Hill K."/>
            <person name="Hitchcock P."/>
            <person name="Jackson P."/>
            <person name="Keim P."/>
            <person name="Longmire J."/>
            <person name="Lucas S."/>
            <person name="Okinaka R."/>
            <person name="Richardson P."/>
            <person name="Rubin E."/>
            <person name="Tice H."/>
        </authorList>
    </citation>
    <scope>NUCLEOTIDE SEQUENCE [LARGE SCALE GENOMIC DNA]</scope>
    <source>
        <strain>Sterne</strain>
    </source>
</reference>
<reference key="3">
    <citation type="journal article" date="2009" name="J. Bacteriol.">
        <title>The complete genome sequence of Bacillus anthracis Ames 'Ancestor'.</title>
        <authorList>
            <person name="Ravel J."/>
            <person name="Jiang L."/>
            <person name="Stanley S.T."/>
            <person name="Wilson M.R."/>
            <person name="Decker R.S."/>
            <person name="Read T.D."/>
            <person name="Worsham P."/>
            <person name="Keim P.S."/>
            <person name="Salzberg S.L."/>
            <person name="Fraser-Liggett C.M."/>
            <person name="Rasko D.A."/>
        </authorList>
    </citation>
    <scope>NUCLEOTIDE SEQUENCE [LARGE SCALE GENOMIC DNA]</scope>
    <source>
        <strain>Ames ancestor</strain>
    </source>
</reference>
<keyword id="KW-0285">Flavoprotein</keyword>
<keyword id="KW-0288">FMN</keyword>
<keyword id="KW-0520">NAD</keyword>
<keyword id="KW-0560">Oxidoreductase</keyword>
<keyword id="KW-1185">Reference proteome</keyword>
<feature type="chain" id="PRO_0000245875" description="FMN-dependent NADH:quinone oxidoreductase 3">
    <location>
        <begin position="1"/>
        <end position="211"/>
    </location>
</feature>
<feature type="binding site" evidence="1">
    <location>
        <begin position="102"/>
        <end position="105"/>
    </location>
    <ligand>
        <name>FMN</name>
        <dbReference type="ChEBI" id="CHEBI:58210"/>
    </ligand>
</feature>
<evidence type="ECO:0000255" key="1">
    <source>
        <dbReference type="HAMAP-Rule" id="MF_01216"/>
    </source>
</evidence>
<proteinExistence type="inferred from homology"/>
<gene>
    <name evidence="1" type="primary">azoR3</name>
    <name type="ordered locus">BA_2239</name>
    <name type="ordered locus">GBAA_2239</name>
    <name type="ordered locus">BAS2085</name>
</gene>
<sequence length="211" mass="22984">MTKVLFITANPNSAEGSFGMAVGEAFIEAYKNEHPQDEVVTIDLFNTTVPAIDADVFAAWGKFAAGEGFEALTEAQQQKVAAMNTNLETFMHADRYVFVTPMWNFSYPSVVKAYLDNLAIAGKTFKYTENGPVGLLEGKKALHIQATGGVYSEGPYAAVDFGRNHLKTVLGFIGVNETEYIAVEGMNANPEKAQEIKEAAIANARELAKRF</sequence>